<keyword id="KW-0238">DNA-binding</keyword>
<keyword id="KW-1185">Reference proteome</keyword>
<keyword id="KW-0680">Restriction system</keyword>
<evidence type="ECO:0000250" key="1"/>
<evidence type="ECO:0000269" key="2">
    <source>
    </source>
</evidence>
<evidence type="ECO:0000303" key="3">
    <source>
    </source>
</evidence>
<evidence type="ECO:0000305" key="4"/>
<evidence type="ECO:0000305" key="5">
    <source>
    </source>
</evidence>
<accession>P75435</accession>
<sequence length="330" mass="37222">MEAPKFVNNACPIPNLNLSRTEEIELDFPPLQIQQKIATILDTFTELSAELSAELSAELSAELSAELSAELSAELSAELSAELSAELSAELSAELSAELSAELSAELSAELRERKKQYAFYRDYLLNQENIRKIYGANIPFETFQVKDICEIRRGRAITKAYIRNNPGENPVYSAATTNDGELGRIKDCDFDGEYITWTTNGYAGVVFYRNGKFNASQDCGVLKVKNKKICTKFLSFLLKIEAPKFVHNLASRPKLSQKVMAEIELSFPPLEIQEKIADILFAFEKLCNDLVEGIPAEIELRKKQLDYYQNFLFNWVQEQKKNSLSTNLN</sequence>
<dbReference type="EMBL" id="U00089">
    <property type="protein sequence ID" value="AAB96141.1"/>
    <property type="molecule type" value="Genomic_DNA"/>
</dbReference>
<dbReference type="PIR" id="S73819">
    <property type="entry name" value="S73819"/>
</dbReference>
<dbReference type="SMR" id="P75435"/>
<dbReference type="IntAct" id="P75435">
    <property type="interactions" value="1"/>
</dbReference>
<dbReference type="STRING" id="272634.MPN_343"/>
<dbReference type="REBASE" id="6704">
    <property type="entry name" value="S.MpnII"/>
</dbReference>
<dbReference type="EnsemblBacteria" id="AAB96141">
    <property type="protein sequence ID" value="AAB96141"/>
    <property type="gene ID" value="MPN_343"/>
</dbReference>
<dbReference type="KEGG" id="mpn:MPN_343"/>
<dbReference type="HOGENOM" id="CLU_021095_6_2_14"/>
<dbReference type="PRO" id="PR:P75435"/>
<dbReference type="Proteomes" id="UP000000808">
    <property type="component" value="Chromosome"/>
</dbReference>
<dbReference type="GO" id="GO:0003677">
    <property type="term" value="F:DNA binding"/>
    <property type="evidence" value="ECO:0007669"/>
    <property type="project" value="UniProtKB-KW"/>
</dbReference>
<dbReference type="GO" id="GO:0009307">
    <property type="term" value="P:DNA restriction-modification system"/>
    <property type="evidence" value="ECO:0007669"/>
    <property type="project" value="UniProtKB-KW"/>
</dbReference>
<dbReference type="CDD" id="cd17255">
    <property type="entry name" value="RMtype1_S_Fco49512ORF2615P-TRD2-CR2_like"/>
    <property type="match status" value="1"/>
</dbReference>
<dbReference type="Gene3D" id="3.90.220.20">
    <property type="entry name" value="DNA methylase specificity domains"/>
    <property type="match status" value="2"/>
</dbReference>
<dbReference type="InterPro" id="IPR000055">
    <property type="entry name" value="Restrct_endonuc_typeI_TRD"/>
</dbReference>
<dbReference type="InterPro" id="IPR044946">
    <property type="entry name" value="Restrct_endonuc_typeI_TRD_sf"/>
</dbReference>
<dbReference type="InterPro" id="IPR051212">
    <property type="entry name" value="Type-I_RE_S_subunit"/>
</dbReference>
<dbReference type="PANTHER" id="PTHR43140:SF1">
    <property type="entry name" value="TYPE I RESTRICTION ENZYME ECOKI SPECIFICITY SUBUNIT"/>
    <property type="match status" value="1"/>
</dbReference>
<dbReference type="PANTHER" id="PTHR43140">
    <property type="entry name" value="TYPE-1 RESTRICTION ENZYME ECOKI SPECIFICITY PROTEIN"/>
    <property type="match status" value="1"/>
</dbReference>
<dbReference type="Pfam" id="PF01420">
    <property type="entry name" value="Methylase_S"/>
    <property type="match status" value="2"/>
</dbReference>
<dbReference type="SUPFAM" id="SSF116734">
    <property type="entry name" value="DNA methylase specificity domain"/>
    <property type="match status" value="2"/>
</dbReference>
<dbReference type="SUPFAM" id="SSF158791">
    <property type="entry name" value="MgtE N-terminal domain-like"/>
    <property type="match status" value="1"/>
</dbReference>
<proteinExistence type="evidence at protein level"/>
<protein>
    <recommendedName>
        <fullName evidence="4">Type I restriction enzyme MpnII specificity subunit</fullName>
        <shortName>S protein</shortName>
    </recommendedName>
    <alternativeName>
        <fullName evidence="3">Type I specificity subunit S.MpnII</fullName>
        <shortName evidence="3">S.MpnII</shortName>
    </alternativeName>
    <alternativeName>
        <fullName>Type-1 restriction enzyme specificity subunit MpnII</fullName>
    </alternativeName>
</protein>
<gene>
    <name type="ordered locus">MPN_343</name>
    <name type="ORF">H91_orf330</name>
    <name type="ORF">MP493</name>
</gene>
<reference key="1">
    <citation type="journal article" date="1996" name="Nucleic Acids Res.">
        <title>Complete sequence analysis of the genome of the bacterium Mycoplasma pneumoniae.</title>
        <authorList>
            <person name="Himmelreich R."/>
            <person name="Hilbert H."/>
            <person name="Plagens H."/>
            <person name="Pirkl E."/>
            <person name="Li B.-C."/>
            <person name="Herrmann R."/>
        </authorList>
    </citation>
    <scope>NUCLEOTIDE SEQUENCE [LARGE SCALE GENOMIC DNA]</scope>
    <source>
        <strain>ATCC 29342 / M129 / Subtype 1</strain>
    </source>
</reference>
<reference key="2">
    <citation type="journal article" date="2003" name="Nucleic Acids Res.">
        <title>A nomenclature for restriction enzymes, DNA methyltransferases, homing endonucleases and their genes.</title>
        <authorList>
            <person name="Roberts R.J."/>
            <person name="Belfort M."/>
            <person name="Bestor T."/>
            <person name="Bhagwat A.S."/>
            <person name="Bickle T.A."/>
            <person name="Bitinaite J."/>
            <person name="Blumenthal R.M."/>
            <person name="Degtyarev S.K."/>
            <person name="Dryden D.T."/>
            <person name="Dybvig K."/>
            <person name="Firman K."/>
            <person name="Gromova E.S."/>
            <person name="Gumport R.I."/>
            <person name="Halford S.E."/>
            <person name="Hattman S."/>
            <person name="Heitman J."/>
            <person name="Hornby D.P."/>
            <person name="Janulaitis A."/>
            <person name="Jeltsch A."/>
            <person name="Josephsen J."/>
            <person name="Kiss A."/>
            <person name="Klaenhammer T.R."/>
            <person name="Kobayashi I."/>
            <person name="Kong H."/>
            <person name="Krueger D.H."/>
            <person name="Lacks S."/>
            <person name="Marinus M.G."/>
            <person name="Miyahara M."/>
            <person name="Morgan R.D."/>
            <person name="Murray N.E."/>
            <person name="Nagaraja V."/>
            <person name="Piekarowicz A."/>
            <person name="Pingoud A."/>
            <person name="Raleigh E."/>
            <person name="Rao D.N."/>
            <person name="Reich N."/>
            <person name="Repin V.E."/>
            <person name="Selker E.U."/>
            <person name="Shaw P.C."/>
            <person name="Stein D.C."/>
            <person name="Stoddard B.L."/>
            <person name="Szybalski W."/>
            <person name="Trautner T.A."/>
            <person name="Van Etten J.L."/>
            <person name="Vitor J.M."/>
            <person name="Wilson G.G."/>
            <person name="Xu S.Y."/>
        </authorList>
    </citation>
    <scope>NOMENCLATURE</scope>
</reference>
<reference key="3">
    <citation type="journal article" date="2013" name="PLoS Genet.">
        <title>Comprehensive methylome characterization of Mycoplasma genitalium and Mycoplasma pneumoniae at single-base resolution.</title>
        <authorList>
            <person name="Lluch-Senar M."/>
            <person name="Luong K."/>
            <person name="Llorens-Rico V."/>
            <person name="Delgado J."/>
            <person name="Fang G."/>
            <person name="Spittle K."/>
            <person name="Clark T.A."/>
            <person name="Schadt E."/>
            <person name="Turner S.W."/>
            <person name="Korlach J."/>
            <person name="Serrano L."/>
        </authorList>
    </citation>
    <scope>FUNCTION</scope>
    <scope>GENOME METHYLATION</scope>
    <scope>SUBUNIT</scope>
    <scope>INDUCTION</scope>
    <source>
        <strain>ATCC 29342 / M129 / Subtype 1</strain>
    </source>
</reference>
<feature type="chain" id="PRO_0000198047" description="Type I restriction enzyme MpnII specificity subunit">
    <location>
        <begin position="1"/>
        <end position="330"/>
    </location>
</feature>
<comment type="function">
    <text evidence="5">The specificity (S) subunit of a type I restriction enzyme; this subunit dictates DNA sequence specificity. The M and S subunits together form a methyltransferase (MTase) that probably methylates A-2 on the top strand and A-3 on the bottom strand of the sequence 5'-GAN(7)TAY-3'. As the bacterial DNA is methylated on this sequence and this is the only type I methylase in the genome, it is probably responsible for all of the methylation on this site in the genome. The R subunit has multiple frameshifts and is probably not expressed in this bacteria.</text>
</comment>
<comment type="subunit">
    <text evidence="5">The methyltransferase is composed of M and S polypeptides.</text>
</comment>
<comment type="induction">
    <text evidence="2">Detected at low levels after 6 but not 96 hours growth (at protein level).</text>
</comment>
<comment type="domain">
    <text evidence="1">Contains two DNA recognition domains, each specifying recognition of one of the two defined components of the target sequence.</text>
</comment>
<comment type="similarity">
    <text evidence="4">Belongs to the type-I restriction system S methylase family.</text>
</comment>
<name>T1SD_MYCPN</name>
<organism>
    <name type="scientific">Mycoplasma pneumoniae (strain ATCC 29342 / M129 / Subtype 1)</name>
    <name type="common">Mycoplasmoides pneumoniae</name>
    <dbReference type="NCBI Taxonomy" id="272634"/>
    <lineage>
        <taxon>Bacteria</taxon>
        <taxon>Bacillati</taxon>
        <taxon>Mycoplasmatota</taxon>
        <taxon>Mycoplasmoidales</taxon>
        <taxon>Mycoplasmoidaceae</taxon>
        <taxon>Mycoplasmoides</taxon>
    </lineage>
</organism>